<gene>
    <name evidence="1" type="primary">TEKT2</name>
</gene>
<dbReference type="EMBL" id="DQ431410">
    <property type="protein sequence ID" value="ABD91531.1"/>
    <property type="molecule type" value="mRNA"/>
</dbReference>
<dbReference type="SMR" id="Q1W6C3"/>
<dbReference type="STRING" id="10036.ENSMAUP00000011154"/>
<dbReference type="eggNOG" id="KOG2685">
    <property type="taxonomic scope" value="Eukaryota"/>
</dbReference>
<dbReference type="Proteomes" id="UP000189706">
    <property type="component" value="Unplaced"/>
</dbReference>
<dbReference type="GO" id="GO:0160111">
    <property type="term" value="C:axonemal A tubule inner sheath"/>
    <property type="evidence" value="ECO:0000250"/>
    <property type="project" value="UniProtKB"/>
</dbReference>
<dbReference type="GO" id="GO:0005879">
    <property type="term" value="C:axonemal microtubule"/>
    <property type="evidence" value="ECO:0000250"/>
    <property type="project" value="UniProtKB"/>
</dbReference>
<dbReference type="GO" id="GO:0005815">
    <property type="term" value="C:microtubule organizing center"/>
    <property type="evidence" value="ECO:0000250"/>
    <property type="project" value="UniProtKB"/>
</dbReference>
<dbReference type="GO" id="GO:0005634">
    <property type="term" value="C:nucleus"/>
    <property type="evidence" value="ECO:0007669"/>
    <property type="project" value="TreeGrafter"/>
</dbReference>
<dbReference type="GO" id="GO:0036126">
    <property type="term" value="C:sperm flagellum"/>
    <property type="evidence" value="ECO:0000250"/>
    <property type="project" value="UniProtKB"/>
</dbReference>
<dbReference type="GO" id="GO:0060271">
    <property type="term" value="P:cilium assembly"/>
    <property type="evidence" value="ECO:0007669"/>
    <property type="project" value="TreeGrafter"/>
</dbReference>
<dbReference type="GO" id="GO:0030317">
    <property type="term" value="P:flagellated sperm motility"/>
    <property type="evidence" value="ECO:0000250"/>
    <property type="project" value="UniProtKB"/>
</dbReference>
<dbReference type="InterPro" id="IPR048256">
    <property type="entry name" value="Tektin-like"/>
</dbReference>
<dbReference type="InterPro" id="IPR000435">
    <property type="entry name" value="Tektins"/>
</dbReference>
<dbReference type="PANTHER" id="PTHR19960">
    <property type="entry name" value="TEKTIN"/>
    <property type="match status" value="1"/>
</dbReference>
<dbReference type="PANTHER" id="PTHR19960:SF29">
    <property type="entry name" value="TEKTIN-2"/>
    <property type="match status" value="1"/>
</dbReference>
<dbReference type="Pfam" id="PF03148">
    <property type="entry name" value="Tektin"/>
    <property type="match status" value="1"/>
</dbReference>
<keyword id="KW-0966">Cell projection</keyword>
<keyword id="KW-0969">Cilium</keyword>
<keyword id="KW-0970">Cilium biogenesis/degradation</keyword>
<keyword id="KW-0175">Coiled coil</keyword>
<keyword id="KW-0963">Cytoplasm</keyword>
<keyword id="KW-0206">Cytoskeleton</keyword>
<keyword id="KW-0282">Flagellum</keyword>
<keyword id="KW-0493">Microtubule</keyword>
<keyword id="KW-0597">Phosphoprotein</keyword>
<keyword id="KW-1185">Reference proteome</keyword>
<keyword id="KW-0832">Ubl conjugation</keyword>
<protein>
    <recommendedName>
        <fullName evidence="1 5">Tektin-2</fullName>
    </recommendedName>
    <alternativeName>
        <fullName evidence="1">Tektin-t</fullName>
    </alternativeName>
    <alternativeName>
        <fullName evidence="1">Testicular tektin</fullName>
    </alternativeName>
</protein>
<proteinExistence type="evidence at protein level"/>
<reference evidence="4 5" key="1">
    <citation type="journal article" date="2010" name="Mol. Reprod. Dev.">
        <title>Inhibition of tyrosine phosphorylation of sperm flagellar proteins, outer dense fiber protein-2 and tektin-2, is associated with impaired motility during capacitation of hamster spermatozoa.</title>
        <authorList>
            <person name="Mariappa D."/>
            <person name="Aladakatti R.H."/>
            <person name="Dasari S.K."/>
            <person name="Sreekumar A."/>
            <person name="Wolkowicz M."/>
            <person name="van der Hoorn F."/>
            <person name="Seshagiri P.B."/>
        </authorList>
    </citation>
    <scope>NUCLEOTIDE SEQUENCE [MRNA]</scope>
    <scope>TISSUE SPECIFICITY</scope>
    <scope>PHOSPHORYLATION</scope>
    <scope>IDENTIFICATION BY MASS SPECTROMETRY</scope>
    <source>
        <tissue evidence="3">Testis</tissue>
    </source>
</reference>
<reference key="2">
    <citation type="journal article" date="2010" name="Asian J. Androl.">
        <title>Glucose-regulated protein precursor (GRP78) and tumor rejection antigen (GP96) are unique to hamster caput epididymal spermatozoa.</title>
        <authorList>
            <person name="Kameshwari D.B."/>
            <person name="Bhande S."/>
            <person name="Sundaram C.S."/>
            <person name="Kota V."/>
            <person name="Siva A.B."/>
            <person name="Shivaji S."/>
        </authorList>
    </citation>
    <scope>IDENTIFICATION BY MASS SPECTROMETRY</scope>
</reference>
<organism>
    <name type="scientific">Mesocricetus auratus</name>
    <name type="common">Golden hamster</name>
    <dbReference type="NCBI Taxonomy" id="10036"/>
    <lineage>
        <taxon>Eukaryota</taxon>
        <taxon>Metazoa</taxon>
        <taxon>Chordata</taxon>
        <taxon>Craniata</taxon>
        <taxon>Vertebrata</taxon>
        <taxon>Euteleostomi</taxon>
        <taxon>Mammalia</taxon>
        <taxon>Eutheria</taxon>
        <taxon>Euarchontoglires</taxon>
        <taxon>Glires</taxon>
        <taxon>Rodentia</taxon>
        <taxon>Myomorpha</taxon>
        <taxon>Muroidea</taxon>
        <taxon>Cricetidae</taxon>
        <taxon>Cricetinae</taxon>
        <taxon>Mesocricetus</taxon>
    </lineage>
</organism>
<feature type="chain" id="PRO_0000394424" description="Tektin-2">
    <location>
        <begin position="1" status="less than"/>
        <end position="87" status="greater than"/>
    </location>
</feature>
<feature type="coiled-coil region" evidence="2">
    <location>
        <begin position="26"/>
        <end position="55"/>
    </location>
</feature>
<feature type="non-terminal residue" evidence="5">
    <location>
        <position position="1"/>
    </location>
</feature>
<feature type="non-terminal residue" evidence="5">
    <location>
        <position position="87"/>
    </location>
</feature>
<name>TEKT2_MESAU</name>
<sequence length="87" mass="10076">LPLDVAIECLTLRESRRDIDVVRDPVEEELLKEVEVIEATKKALQQRVSQAFQQLCLLQEVRQQLCSDHRDKMESLDIDRGCLSLNL</sequence>
<evidence type="ECO:0000250" key="1">
    <source>
        <dbReference type="UniProtKB" id="Q922G7"/>
    </source>
</evidence>
<evidence type="ECO:0000255" key="2"/>
<evidence type="ECO:0000269" key="3">
    <source>
    </source>
</evidence>
<evidence type="ECO:0000305" key="4"/>
<evidence type="ECO:0000312" key="5">
    <source>
        <dbReference type="EMBL" id="ABD91531.1"/>
    </source>
</evidence>
<comment type="function">
    <text evidence="1">Microtubule inner protein (MIP) part of the dynein-decorated doublet microtubules (DMTs) in cilia and flagellar axoneme. Plays a key role in the assembly or attachment of the inner dynein arm to microtubules in sperm flagella and tracheal cilia. Forms filamentous polymers in the walls of ciliary and flagellar microtubules.</text>
</comment>
<comment type="subunit">
    <text evidence="1">Microtubule inner protein component of sperm flagellar doublet microtubules (By similarity). May interact with CCDC172 (By similarity).</text>
</comment>
<comment type="subcellular location">
    <subcellularLocation>
        <location evidence="1">Cytoplasm</location>
        <location evidence="1">Cytoskeleton</location>
        <location evidence="1">Cilium axoneme</location>
    </subcellularLocation>
    <subcellularLocation>
        <location evidence="1">Cytoplasm</location>
        <location evidence="1">Cytoskeleton</location>
        <location evidence="1">Flagellum axoneme</location>
    </subcellularLocation>
    <subcellularLocation>
        <location evidence="1">Cytoplasm</location>
        <location evidence="1">Cytoskeleton</location>
        <location evidence="1">Microtubule organizing center</location>
    </subcellularLocation>
    <text evidence="1">Colocalized with CCDC172 at the perinuclear region.</text>
</comment>
<comment type="tissue specificity">
    <text evidence="3">Detected in sperm flagella (at protein level).</text>
</comment>
<comment type="PTM">
    <text evidence="3">Tyrosine phosphorylated.</text>
</comment>
<comment type="PTM">
    <text evidence="1">Ubiquitinated, leading to its degradation. Deubiquitinated by USP16, promoting its stability.</text>
</comment>
<comment type="similarity">
    <text evidence="2">Belongs to the tektin family.</text>
</comment>
<accession>Q1W6C3</accession>